<dbReference type="EC" id="6.2.1.5" evidence="1"/>
<dbReference type="EMBL" id="CP000469">
    <property type="protein sequence ID" value="ABK47945.1"/>
    <property type="molecule type" value="Genomic_DNA"/>
</dbReference>
<dbReference type="RefSeq" id="WP_011716735.1">
    <property type="nucleotide sequence ID" value="NC_008577.1"/>
</dbReference>
<dbReference type="SMR" id="A0KVX6"/>
<dbReference type="STRING" id="94122.Shewana3_1712"/>
<dbReference type="KEGG" id="shn:Shewana3_1712"/>
<dbReference type="eggNOG" id="COG0045">
    <property type="taxonomic scope" value="Bacteria"/>
</dbReference>
<dbReference type="HOGENOM" id="CLU_037430_0_2_6"/>
<dbReference type="OrthoDB" id="9802602at2"/>
<dbReference type="UniPathway" id="UPA00223">
    <property type="reaction ID" value="UER00999"/>
</dbReference>
<dbReference type="Proteomes" id="UP000002589">
    <property type="component" value="Chromosome"/>
</dbReference>
<dbReference type="GO" id="GO:0005829">
    <property type="term" value="C:cytosol"/>
    <property type="evidence" value="ECO:0007669"/>
    <property type="project" value="TreeGrafter"/>
</dbReference>
<dbReference type="GO" id="GO:0042709">
    <property type="term" value="C:succinate-CoA ligase complex"/>
    <property type="evidence" value="ECO:0007669"/>
    <property type="project" value="TreeGrafter"/>
</dbReference>
<dbReference type="GO" id="GO:0005524">
    <property type="term" value="F:ATP binding"/>
    <property type="evidence" value="ECO:0007669"/>
    <property type="project" value="UniProtKB-UniRule"/>
</dbReference>
<dbReference type="GO" id="GO:0000287">
    <property type="term" value="F:magnesium ion binding"/>
    <property type="evidence" value="ECO:0007669"/>
    <property type="project" value="UniProtKB-UniRule"/>
</dbReference>
<dbReference type="GO" id="GO:0004775">
    <property type="term" value="F:succinate-CoA ligase (ADP-forming) activity"/>
    <property type="evidence" value="ECO:0007669"/>
    <property type="project" value="UniProtKB-UniRule"/>
</dbReference>
<dbReference type="GO" id="GO:0004776">
    <property type="term" value="F:succinate-CoA ligase (GDP-forming) activity"/>
    <property type="evidence" value="ECO:0007669"/>
    <property type="project" value="RHEA"/>
</dbReference>
<dbReference type="GO" id="GO:0006104">
    <property type="term" value="P:succinyl-CoA metabolic process"/>
    <property type="evidence" value="ECO:0007669"/>
    <property type="project" value="TreeGrafter"/>
</dbReference>
<dbReference type="GO" id="GO:0006099">
    <property type="term" value="P:tricarboxylic acid cycle"/>
    <property type="evidence" value="ECO:0007669"/>
    <property type="project" value="UniProtKB-UniRule"/>
</dbReference>
<dbReference type="FunFam" id="3.30.1490.20:FF:000002">
    <property type="entry name" value="Succinate--CoA ligase [ADP-forming] subunit beta"/>
    <property type="match status" value="1"/>
</dbReference>
<dbReference type="FunFam" id="3.30.470.20:FF:000002">
    <property type="entry name" value="Succinate--CoA ligase [ADP-forming] subunit beta"/>
    <property type="match status" value="1"/>
</dbReference>
<dbReference type="FunFam" id="3.40.50.261:FF:000001">
    <property type="entry name" value="Succinate--CoA ligase [ADP-forming] subunit beta"/>
    <property type="match status" value="1"/>
</dbReference>
<dbReference type="Gene3D" id="3.30.1490.20">
    <property type="entry name" value="ATP-grasp fold, A domain"/>
    <property type="match status" value="1"/>
</dbReference>
<dbReference type="Gene3D" id="3.30.470.20">
    <property type="entry name" value="ATP-grasp fold, B domain"/>
    <property type="match status" value="1"/>
</dbReference>
<dbReference type="Gene3D" id="3.40.50.261">
    <property type="entry name" value="Succinyl-CoA synthetase domains"/>
    <property type="match status" value="1"/>
</dbReference>
<dbReference type="HAMAP" id="MF_00558">
    <property type="entry name" value="Succ_CoA_beta"/>
    <property type="match status" value="1"/>
</dbReference>
<dbReference type="InterPro" id="IPR011761">
    <property type="entry name" value="ATP-grasp"/>
</dbReference>
<dbReference type="InterPro" id="IPR013650">
    <property type="entry name" value="ATP-grasp_succ-CoA_synth-type"/>
</dbReference>
<dbReference type="InterPro" id="IPR013815">
    <property type="entry name" value="ATP_grasp_subdomain_1"/>
</dbReference>
<dbReference type="InterPro" id="IPR017866">
    <property type="entry name" value="Succ-CoA_synthase_bsu_CS"/>
</dbReference>
<dbReference type="InterPro" id="IPR005811">
    <property type="entry name" value="SUCC_ACL_C"/>
</dbReference>
<dbReference type="InterPro" id="IPR005809">
    <property type="entry name" value="Succ_CoA_ligase-like_bsu"/>
</dbReference>
<dbReference type="InterPro" id="IPR016102">
    <property type="entry name" value="Succinyl-CoA_synth-like"/>
</dbReference>
<dbReference type="NCBIfam" id="NF001913">
    <property type="entry name" value="PRK00696.1"/>
    <property type="match status" value="1"/>
</dbReference>
<dbReference type="NCBIfam" id="TIGR01016">
    <property type="entry name" value="sucCoAbeta"/>
    <property type="match status" value="1"/>
</dbReference>
<dbReference type="PANTHER" id="PTHR11815:SF10">
    <property type="entry name" value="SUCCINATE--COA LIGASE [GDP-FORMING] SUBUNIT BETA, MITOCHONDRIAL"/>
    <property type="match status" value="1"/>
</dbReference>
<dbReference type="PANTHER" id="PTHR11815">
    <property type="entry name" value="SUCCINYL-COA SYNTHETASE BETA CHAIN"/>
    <property type="match status" value="1"/>
</dbReference>
<dbReference type="Pfam" id="PF08442">
    <property type="entry name" value="ATP-grasp_2"/>
    <property type="match status" value="1"/>
</dbReference>
<dbReference type="Pfam" id="PF00549">
    <property type="entry name" value="Ligase_CoA"/>
    <property type="match status" value="1"/>
</dbReference>
<dbReference type="PIRSF" id="PIRSF001554">
    <property type="entry name" value="SucCS_beta"/>
    <property type="match status" value="1"/>
</dbReference>
<dbReference type="SUPFAM" id="SSF56059">
    <property type="entry name" value="Glutathione synthetase ATP-binding domain-like"/>
    <property type="match status" value="1"/>
</dbReference>
<dbReference type="SUPFAM" id="SSF52210">
    <property type="entry name" value="Succinyl-CoA synthetase domains"/>
    <property type="match status" value="1"/>
</dbReference>
<dbReference type="PROSITE" id="PS50975">
    <property type="entry name" value="ATP_GRASP"/>
    <property type="match status" value="1"/>
</dbReference>
<dbReference type="PROSITE" id="PS01217">
    <property type="entry name" value="SUCCINYL_COA_LIG_3"/>
    <property type="match status" value="1"/>
</dbReference>
<sequence>MNLHEYQAKSLFAEYGLPVSEGFACDTAQEAVEAAGRIGGNLWVVKCQVHAGGRGKAGGVKVTGDKEEIRAFAEHWLGKNLVTYQTDEKGQPVAKILVESCTDIANELYLGAVVDRATRRVVFMASTEGGVEIEKVAEETPELIHKAIIDPLTGPQPYQARDLGFKLGLNPTQMKQFTKIFMGLATMFVDHDFALLEINPLVITTEGNLHCLDGKIGIDGNALFRQAKIKAMHDPSQDDAREAHAAMFELNYVALDGNVGCMVNGAGLAMGTMDIVNLHGGKPANFLDVGGGATKERVAEAFKIILSDSNVKAVLVNIFGGIVRCDMIAEGIIGAVKEVGVKVPVVVRLEGTNAELGREVLAKSGLDIIAANSLTDAAEQVVKAAEGK</sequence>
<evidence type="ECO:0000255" key="1">
    <source>
        <dbReference type="HAMAP-Rule" id="MF_00558"/>
    </source>
</evidence>
<gene>
    <name evidence="1" type="primary">sucC</name>
    <name type="ordered locus">Shewana3_1712</name>
</gene>
<comment type="function">
    <text evidence="1">Succinyl-CoA synthetase functions in the citric acid cycle (TCA), coupling the hydrolysis of succinyl-CoA to the synthesis of either ATP or GTP and thus represents the only step of substrate-level phosphorylation in the TCA. The beta subunit provides nucleotide specificity of the enzyme and binds the substrate succinate, while the binding sites for coenzyme A and phosphate are found in the alpha subunit.</text>
</comment>
<comment type="catalytic activity">
    <reaction evidence="1">
        <text>succinate + ATP + CoA = succinyl-CoA + ADP + phosphate</text>
        <dbReference type="Rhea" id="RHEA:17661"/>
        <dbReference type="ChEBI" id="CHEBI:30031"/>
        <dbReference type="ChEBI" id="CHEBI:30616"/>
        <dbReference type="ChEBI" id="CHEBI:43474"/>
        <dbReference type="ChEBI" id="CHEBI:57287"/>
        <dbReference type="ChEBI" id="CHEBI:57292"/>
        <dbReference type="ChEBI" id="CHEBI:456216"/>
        <dbReference type="EC" id="6.2.1.5"/>
    </reaction>
    <physiologicalReaction direction="right-to-left" evidence="1">
        <dbReference type="Rhea" id="RHEA:17663"/>
    </physiologicalReaction>
</comment>
<comment type="catalytic activity">
    <reaction evidence="1">
        <text>GTP + succinate + CoA = succinyl-CoA + GDP + phosphate</text>
        <dbReference type="Rhea" id="RHEA:22120"/>
        <dbReference type="ChEBI" id="CHEBI:30031"/>
        <dbReference type="ChEBI" id="CHEBI:37565"/>
        <dbReference type="ChEBI" id="CHEBI:43474"/>
        <dbReference type="ChEBI" id="CHEBI:57287"/>
        <dbReference type="ChEBI" id="CHEBI:57292"/>
        <dbReference type="ChEBI" id="CHEBI:58189"/>
    </reaction>
    <physiologicalReaction direction="right-to-left" evidence="1">
        <dbReference type="Rhea" id="RHEA:22122"/>
    </physiologicalReaction>
</comment>
<comment type="cofactor">
    <cofactor evidence="1">
        <name>Mg(2+)</name>
        <dbReference type="ChEBI" id="CHEBI:18420"/>
    </cofactor>
    <text evidence="1">Binds 1 Mg(2+) ion per subunit.</text>
</comment>
<comment type="pathway">
    <text evidence="1">Carbohydrate metabolism; tricarboxylic acid cycle; succinate from succinyl-CoA (ligase route): step 1/1.</text>
</comment>
<comment type="subunit">
    <text evidence="1">Heterotetramer of two alpha and two beta subunits.</text>
</comment>
<comment type="similarity">
    <text evidence="1">Belongs to the succinate/malate CoA ligase beta subunit family.</text>
</comment>
<accession>A0KVX6</accession>
<protein>
    <recommendedName>
        <fullName evidence="1">Succinate--CoA ligase [ADP-forming] subunit beta</fullName>
        <ecNumber evidence="1">6.2.1.5</ecNumber>
    </recommendedName>
    <alternativeName>
        <fullName evidence="1">Succinyl-CoA synthetase subunit beta</fullName>
        <shortName evidence="1">SCS-beta</shortName>
    </alternativeName>
</protein>
<organism>
    <name type="scientific">Shewanella sp. (strain ANA-3)</name>
    <dbReference type="NCBI Taxonomy" id="94122"/>
    <lineage>
        <taxon>Bacteria</taxon>
        <taxon>Pseudomonadati</taxon>
        <taxon>Pseudomonadota</taxon>
        <taxon>Gammaproteobacteria</taxon>
        <taxon>Alteromonadales</taxon>
        <taxon>Shewanellaceae</taxon>
        <taxon>Shewanella</taxon>
    </lineage>
</organism>
<keyword id="KW-0067">ATP-binding</keyword>
<keyword id="KW-0436">Ligase</keyword>
<keyword id="KW-0460">Magnesium</keyword>
<keyword id="KW-0479">Metal-binding</keyword>
<keyword id="KW-0547">Nucleotide-binding</keyword>
<keyword id="KW-0816">Tricarboxylic acid cycle</keyword>
<name>SUCC_SHESA</name>
<feature type="chain" id="PRO_1000082227" description="Succinate--CoA ligase [ADP-forming] subunit beta">
    <location>
        <begin position="1"/>
        <end position="388"/>
    </location>
</feature>
<feature type="domain" description="ATP-grasp" evidence="1">
    <location>
        <begin position="9"/>
        <end position="244"/>
    </location>
</feature>
<feature type="binding site" evidence="1">
    <location>
        <position position="46"/>
    </location>
    <ligand>
        <name>ATP</name>
        <dbReference type="ChEBI" id="CHEBI:30616"/>
    </ligand>
</feature>
<feature type="binding site" evidence="1">
    <location>
        <begin position="53"/>
        <end position="55"/>
    </location>
    <ligand>
        <name>ATP</name>
        <dbReference type="ChEBI" id="CHEBI:30616"/>
    </ligand>
</feature>
<feature type="binding site" evidence="1">
    <location>
        <position position="99"/>
    </location>
    <ligand>
        <name>ATP</name>
        <dbReference type="ChEBI" id="CHEBI:30616"/>
    </ligand>
</feature>
<feature type="binding site" evidence="1">
    <location>
        <position position="102"/>
    </location>
    <ligand>
        <name>ATP</name>
        <dbReference type="ChEBI" id="CHEBI:30616"/>
    </ligand>
</feature>
<feature type="binding site" evidence="1">
    <location>
        <position position="107"/>
    </location>
    <ligand>
        <name>ATP</name>
        <dbReference type="ChEBI" id="CHEBI:30616"/>
    </ligand>
</feature>
<feature type="binding site" evidence="1">
    <location>
        <position position="199"/>
    </location>
    <ligand>
        <name>Mg(2+)</name>
        <dbReference type="ChEBI" id="CHEBI:18420"/>
    </ligand>
</feature>
<feature type="binding site" evidence="1">
    <location>
        <position position="213"/>
    </location>
    <ligand>
        <name>Mg(2+)</name>
        <dbReference type="ChEBI" id="CHEBI:18420"/>
    </ligand>
</feature>
<feature type="binding site" evidence="1">
    <location>
        <position position="264"/>
    </location>
    <ligand>
        <name>substrate</name>
        <note>ligand shared with subunit alpha</note>
    </ligand>
</feature>
<feature type="binding site" evidence="1">
    <location>
        <begin position="321"/>
        <end position="323"/>
    </location>
    <ligand>
        <name>substrate</name>
        <note>ligand shared with subunit alpha</note>
    </ligand>
</feature>
<proteinExistence type="inferred from homology"/>
<reference key="1">
    <citation type="submission" date="2006-09" db="EMBL/GenBank/DDBJ databases">
        <title>Complete sequence of chromosome 1 of Shewanella sp. ANA-3.</title>
        <authorList>
            <person name="Copeland A."/>
            <person name="Lucas S."/>
            <person name="Lapidus A."/>
            <person name="Barry K."/>
            <person name="Detter J.C."/>
            <person name="Glavina del Rio T."/>
            <person name="Hammon N."/>
            <person name="Israni S."/>
            <person name="Dalin E."/>
            <person name="Tice H."/>
            <person name="Pitluck S."/>
            <person name="Chertkov O."/>
            <person name="Brettin T."/>
            <person name="Bruce D."/>
            <person name="Han C."/>
            <person name="Tapia R."/>
            <person name="Gilna P."/>
            <person name="Schmutz J."/>
            <person name="Larimer F."/>
            <person name="Land M."/>
            <person name="Hauser L."/>
            <person name="Kyrpides N."/>
            <person name="Kim E."/>
            <person name="Newman D."/>
            <person name="Salticov C."/>
            <person name="Konstantinidis K."/>
            <person name="Klappenback J."/>
            <person name="Tiedje J."/>
            <person name="Richardson P."/>
        </authorList>
    </citation>
    <scope>NUCLEOTIDE SEQUENCE [LARGE SCALE GENOMIC DNA]</scope>
    <source>
        <strain>ANA-3</strain>
    </source>
</reference>